<evidence type="ECO:0000255" key="1">
    <source>
        <dbReference type="HAMAP-Rule" id="MF_00531"/>
    </source>
</evidence>
<evidence type="ECO:0000305" key="2"/>
<proteinExistence type="inferred from homology"/>
<keyword id="KW-1185">Reference proteome</keyword>
<keyword id="KW-0687">Ribonucleoprotein</keyword>
<keyword id="KW-0689">Ribosomal protein</keyword>
<keyword id="KW-0694">RNA-binding</keyword>
<keyword id="KW-0699">rRNA-binding</keyword>
<organism>
    <name type="scientific">Neisseria gonorrhoeae (strain ATCC 700825 / FA 1090)</name>
    <dbReference type="NCBI Taxonomy" id="242231"/>
    <lineage>
        <taxon>Bacteria</taxon>
        <taxon>Pseudomonadati</taxon>
        <taxon>Pseudomonadota</taxon>
        <taxon>Betaproteobacteria</taxon>
        <taxon>Neisseriales</taxon>
        <taxon>Neisseriaceae</taxon>
        <taxon>Neisseria</taxon>
    </lineage>
</organism>
<feature type="chain" id="PRO_0000265388" description="Small ribosomal subunit protein uS19">
    <location>
        <begin position="1"/>
        <end position="92"/>
    </location>
</feature>
<reference key="1">
    <citation type="submission" date="2003-03" db="EMBL/GenBank/DDBJ databases">
        <title>The complete genome sequence of Neisseria gonorrhoeae.</title>
        <authorList>
            <person name="Lewis L.A."/>
            <person name="Gillaspy A.F."/>
            <person name="McLaughlin R.E."/>
            <person name="Gipson M."/>
            <person name="Ducey T.F."/>
            <person name="Ownbey T."/>
            <person name="Hartman K."/>
            <person name="Nydick C."/>
            <person name="Carson M.B."/>
            <person name="Vaughn J."/>
            <person name="Thomson C."/>
            <person name="Song L."/>
            <person name="Lin S."/>
            <person name="Yuan X."/>
            <person name="Najar F."/>
            <person name="Zhan M."/>
            <person name="Ren Q."/>
            <person name="Zhu H."/>
            <person name="Qi S."/>
            <person name="Kenton S.M."/>
            <person name="Lai H."/>
            <person name="White J.D."/>
            <person name="Clifton S."/>
            <person name="Roe B.A."/>
            <person name="Dyer D.W."/>
        </authorList>
    </citation>
    <scope>NUCLEOTIDE SEQUENCE [LARGE SCALE GENOMIC DNA]</scope>
    <source>
        <strain>ATCC 700825 / FA 1090</strain>
    </source>
</reference>
<gene>
    <name evidence="1" type="primary">rpsS</name>
    <name type="ordered locus">NGO_1834</name>
</gene>
<protein>
    <recommendedName>
        <fullName evidence="1">Small ribosomal subunit protein uS19</fullName>
    </recommendedName>
    <alternativeName>
        <fullName evidence="2">30S ribosomal protein S19</fullName>
    </alternativeName>
</protein>
<name>RS19_NEIG1</name>
<comment type="function">
    <text evidence="1">Protein S19 forms a complex with S13 that binds strongly to the 16S ribosomal RNA.</text>
</comment>
<comment type="similarity">
    <text evidence="1">Belongs to the universal ribosomal protein uS19 family.</text>
</comment>
<sequence>MARSLKKGPYVDLHLLKKVDAVRASNDKRPIKTWSRRSTILPDFIGLTIAVHNGRTHVPVFISDNMVGHKLGEFSLTRTFKGHLADKKAKKK</sequence>
<accession>Q5F5T1</accession>
<dbReference type="EMBL" id="AE004969">
    <property type="protein sequence ID" value="AAW90456.1"/>
    <property type="molecule type" value="Genomic_DNA"/>
</dbReference>
<dbReference type="RefSeq" id="WP_003690082.1">
    <property type="nucleotide sequence ID" value="NC_002946.2"/>
</dbReference>
<dbReference type="RefSeq" id="YP_208868.1">
    <property type="nucleotide sequence ID" value="NC_002946.2"/>
</dbReference>
<dbReference type="SMR" id="Q5F5T1"/>
<dbReference type="STRING" id="242231.NGO_1834"/>
<dbReference type="GeneID" id="66754299"/>
<dbReference type="KEGG" id="ngo:NGO_1834"/>
<dbReference type="PATRIC" id="fig|242231.10.peg.2205"/>
<dbReference type="HOGENOM" id="CLU_144911_0_1_4"/>
<dbReference type="Proteomes" id="UP000000535">
    <property type="component" value="Chromosome"/>
</dbReference>
<dbReference type="GO" id="GO:0005737">
    <property type="term" value="C:cytoplasm"/>
    <property type="evidence" value="ECO:0007669"/>
    <property type="project" value="UniProtKB-ARBA"/>
</dbReference>
<dbReference type="GO" id="GO:0015935">
    <property type="term" value="C:small ribosomal subunit"/>
    <property type="evidence" value="ECO:0007669"/>
    <property type="project" value="InterPro"/>
</dbReference>
<dbReference type="GO" id="GO:0019843">
    <property type="term" value="F:rRNA binding"/>
    <property type="evidence" value="ECO:0007669"/>
    <property type="project" value="UniProtKB-UniRule"/>
</dbReference>
<dbReference type="GO" id="GO:0003735">
    <property type="term" value="F:structural constituent of ribosome"/>
    <property type="evidence" value="ECO:0007669"/>
    <property type="project" value="InterPro"/>
</dbReference>
<dbReference type="GO" id="GO:0000028">
    <property type="term" value="P:ribosomal small subunit assembly"/>
    <property type="evidence" value="ECO:0007669"/>
    <property type="project" value="TreeGrafter"/>
</dbReference>
<dbReference type="GO" id="GO:0006412">
    <property type="term" value="P:translation"/>
    <property type="evidence" value="ECO:0007669"/>
    <property type="project" value="UniProtKB-UniRule"/>
</dbReference>
<dbReference type="FunFam" id="3.30.860.10:FF:000001">
    <property type="entry name" value="30S ribosomal protein S19"/>
    <property type="match status" value="1"/>
</dbReference>
<dbReference type="Gene3D" id="3.30.860.10">
    <property type="entry name" value="30s Ribosomal Protein S19, Chain A"/>
    <property type="match status" value="1"/>
</dbReference>
<dbReference type="HAMAP" id="MF_00531">
    <property type="entry name" value="Ribosomal_uS19"/>
    <property type="match status" value="1"/>
</dbReference>
<dbReference type="InterPro" id="IPR002222">
    <property type="entry name" value="Ribosomal_uS19"/>
</dbReference>
<dbReference type="InterPro" id="IPR005732">
    <property type="entry name" value="Ribosomal_uS19_bac-type"/>
</dbReference>
<dbReference type="InterPro" id="IPR020934">
    <property type="entry name" value="Ribosomal_uS19_CS"/>
</dbReference>
<dbReference type="InterPro" id="IPR023575">
    <property type="entry name" value="Ribosomal_uS19_SF"/>
</dbReference>
<dbReference type="NCBIfam" id="TIGR01050">
    <property type="entry name" value="rpsS_bact"/>
    <property type="match status" value="1"/>
</dbReference>
<dbReference type="PANTHER" id="PTHR11880">
    <property type="entry name" value="RIBOSOMAL PROTEIN S19P FAMILY MEMBER"/>
    <property type="match status" value="1"/>
</dbReference>
<dbReference type="PANTHER" id="PTHR11880:SF8">
    <property type="entry name" value="SMALL RIBOSOMAL SUBUNIT PROTEIN US19M"/>
    <property type="match status" value="1"/>
</dbReference>
<dbReference type="Pfam" id="PF00203">
    <property type="entry name" value="Ribosomal_S19"/>
    <property type="match status" value="1"/>
</dbReference>
<dbReference type="PIRSF" id="PIRSF002144">
    <property type="entry name" value="Ribosomal_S19"/>
    <property type="match status" value="1"/>
</dbReference>
<dbReference type="PRINTS" id="PR00975">
    <property type="entry name" value="RIBOSOMALS19"/>
</dbReference>
<dbReference type="SUPFAM" id="SSF54570">
    <property type="entry name" value="Ribosomal protein S19"/>
    <property type="match status" value="1"/>
</dbReference>
<dbReference type="PROSITE" id="PS00323">
    <property type="entry name" value="RIBOSOMAL_S19"/>
    <property type="match status" value="1"/>
</dbReference>